<dbReference type="EMBL" id="AB195681">
    <property type="protein sequence ID" value="BAD91011.1"/>
    <property type="molecule type" value="mRNA"/>
</dbReference>
<dbReference type="EMBL" id="AK006830">
    <property type="protein sequence ID" value="BAB24761.1"/>
    <property type="molecule type" value="mRNA"/>
</dbReference>
<dbReference type="CCDS" id="CCDS21255.1"/>
<dbReference type="RefSeq" id="NP_001018013.1">
    <property type="nucleotide sequence ID" value="NM_001018013.2"/>
</dbReference>
<dbReference type="RefSeq" id="NP_001405915.1">
    <property type="nucleotide sequence ID" value="NM_001418986.1"/>
</dbReference>
<dbReference type="PDB" id="5B5K">
    <property type="method" value="X-ray"/>
    <property type="resolution" value="2.50 A"/>
    <property type="chains" value="A=22-257"/>
</dbReference>
<dbReference type="PDBsum" id="5B5K"/>
<dbReference type="SMR" id="Q9D9J7"/>
<dbReference type="FunCoup" id="Q9D9J7">
    <property type="interactions" value="11"/>
</dbReference>
<dbReference type="STRING" id="10090.ENSMUSP00000033100"/>
<dbReference type="GlyCosmos" id="Q9D9J7">
    <property type="glycosylation" value="1 site, No reported glycans"/>
</dbReference>
<dbReference type="GlyGen" id="Q9D9J7">
    <property type="glycosylation" value="2 sites"/>
</dbReference>
<dbReference type="iPTMnet" id="Q9D9J7"/>
<dbReference type="PhosphoSitePlus" id="Q9D9J7"/>
<dbReference type="PaxDb" id="10090-ENSMUSP00000033100"/>
<dbReference type="ProteomicsDB" id="269231"/>
<dbReference type="Antibodypedia" id="31796">
    <property type="antibodies" value="132 antibodies from 23 providers"/>
</dbReference>
<dbReference type="DNASU" id="73456"/>
<dbReference type="Ensembl" id="ENSMUST00000033100.5">
    <property type="protein sequence ID" value="ENSMUSP00000033100.5"/>
    <property type="gene ID" value="ENSMUSG00000064158.7"/>
</dbReference>
<dbReference type="GeneID" id="73456"/>
<dbReference type="KEGG" id="mmu:73456"/>
<dbReference type="UCSC" id="uc009gwh.1">
    <property type="organism name" value="mouse"/>
</dbReference>
<dbReference type="AGR" id="MGI:1920706"/>
<dbReference type="CTD" id="284359"/>
<dbReference type="MGI" id="MGI:1920706">
    <property type="gene designation" value="Izumo1"/>
</dbReference>
<dbReference type="VEuPathDB" id="HostDB:ENSMUSG00000064158"/>
<dbReference type="eggNOG" id="ENOG502SFD8">
    <property type="taxonomic scope" value="Eukaryota"/>
</dbReference>
<dbReference type="GeneTree" id="ENSGT00390000015014"/>
<dbReference type="HOGENOM" id="CLU_044481_0_0_1"/>
<dbReference type="InParanoid" id="Q9D9J7"/>
<dbReference type="OMA" id="ATIINFH"/>
<dbReference type="OrthoDB" id="9907157at2759"/>
<dbReference type="PhylomeDB" id="Q9D9J7"/>
<dbReference type="TreeFam" id="TF338356"/>
<dbReference type="Reactome" id="R-MMU-1300645">
    <property type="pathway name" value="Acrosome Reaction and Sperm:Oocyte Membrane Binding"/>
</dbReference>
<dbReference type="BioGRID-ORCS" id="73456">
    <property type="hits" value="0 hits in 77 CRISPR screens"/>
</dbReference>
<dbReference type="ChiTaRS" id="Izumo1">
    <property type="organism name" value="mouse"/>
</dbReference>
<dbReference type="PRO" id="PR:Q9D9J7"/>
<dbReference type="Proteomes" id="UP000000589">
    <property type="component" value="Chromosome 7"/>
</dbReference>
<dbReference type="RNAct" id="Q9D9J7">
    <property type="molecule type" value="protein"/>
</dbReference>
<dbReference type="Bgee" id="ENSMUSG00000064158">
    <property type="expression patterns" value="Expressed in spermatid and 18 other cell types or tissues"/>
</dbReference>
<dbReference type="GO" id="GO:0002080">
    <property type="term" value="C:acrosomal membrane"/>
    <property type="evidence" value="ECO:0000314"/>
    <property type="project" value="UniProtKB"/>
</dbReference>
<dbReference type="GO" id="GO:0001669">
    <property type="term" value="C:acrosomal vesicle"/>
    <property type="evidence" value="ECO:0000314"/>
    <property type="project" value="UniProtKB"/>
</dbReference>
<dbReference type="GO" id="GO:0005789">
    <property type="term" value="C:endoplasmic reticulum membrane"/>
    <property type="evidence" value="ECO:0000314"/>
    <property type="project" value="UniProtKB"/>
</dbReference>
<dbReference type="GO" id="GO:0016020">
    <property type="term" value="C:membrane"/>
    <property type="evidence" value="ECO:0000314"/>
    <property type="project" value="HGNC-UCL"/>
</dbReference>
<dbReference type="GO" id="GO:0005886">
    <property type="term" value="C:plasma membrane"/>
    <property type="evidence" value="ECO:0000314"/>
    <property type="project" value="UniProtKB"/>
</dbReference>
<dbReference type="GO" id="GO:0098635">
    <property type="term" value="C:protein complex involved in cell-cell adhesion"/>
    <property type="evidence" value="ECO:0000314"/>
    <property type="project" value="UniProtKB"/>
</dbReference>
<dbReference type="GO" id="GO:0086080">
    <property type="term" value="F:protein binding involved in heterotypic cell-cell adhesion"/>
    <property type="evidence" value="ECO:0000315"/>
    <property type="project" value="UniProtKB"/>
</dbReference>
<dbReference type="GO" id="GO:0042803">
    <property type="term" value="F:protein homodimerization activity"/>
    <property type="evidence" value="ECO:0000314"/>
    <property type="project" value="UniProtKB"/>
</dbReference>
<dbReference type="GO" id="GO:0048018">
    <property type="term" value="F:receptor ligand activity"/>
    <property type="evidence" value="ECO:0000314"/>
    <property type="project" value="UniProt"/>
</dbReference>
<dbReference type="GO" id="GO:0005102">
    <property type="term" value="F:signaling receptor binding"/>
    <property type="evidence" value="ECO:0000353"/>
    <property type="project" value="UniProtKB"/>
</dbReference>
<dbReference type="GO" id="GO:0007155">
    <property type="term" value="P:cell adhesion"/>
    <property type="evidence" value="ECO:0000305"/>
    <property type="project" value="HGNC-UCL"/>
</dbReference>
<dbReference type="GO" id="GO:0007342">
    <property type="term" value="P:fusion of sperm to egg plasma membrane involved in single fertilization"/>
    <property type="evidence" value="ECO:0000314"/>
    <property type="project" value="HGNC-UCL"/>
</dbReference>
<dbReference type="GO" id="GO:0035036">
    <property type="term" value="P:sperm-egg recognition"/>
    <property type="evidence" value="ECO:0000315"/>
    <property type="project" value="UniProtKB"/>
</dbReference>
<dbReference type="GO" id="GO:0000768">
    <property type="term" value="P:syncytium formation by plasma membrane fusion"/>
    <property type="evidence" value="ECO:0000315"/>
    <property type="project" value="UniProtKB"/>
</dbReference>
<dbReference type="InterPro" id="IPR036179">
    <property type="entry name" value="Ig-like_dom_sf"/>
</dbReference>
<dbReference type="InterPro" id="IPR029389">
    <property type="entry name" value="IZUMO"/>
</dbReference>
<dbReference type="InterPro" id="IPR032699">
    <property type="entry name" value="Izumo-Ig"/>
</dbReference>
<dbReference type="InterPro" id="IPR032700">
    <property type="entry name" value="IZUMO1"/>
</dbReference>
<dbReference type="PANTHER" id="PTHR35540">
    <property type="entry name" value="IZUMO SPERM-EGG FUSION PROTEIN 1"/>
    <property type="match status" value="1"/>
</dbReference>
<dbReference type="PANTHER" id="PTHR35540:SF1">
    <property type="entry name" value="IZUMO SPERM-EGG FUSION PROTEIN 1"/>
    <property type="match status" value="1"/>
</dbReference>
<dbReference type="Pfam" id="PF15005">
    <property type="entry name" value="IZUMO"/>
    <property type="match status" value="1"/>
</dbReference>
<dbReference type="Pfam" id="PF16706">
    <property type="entry name" value="Izumo-Ig"/>
    <property type="match status" value="1"/>
</dbReference>
<dbReference type="SUPFAM" id="SSF48726">
    <property type="entry name" value="Immunoglobulin"/>
    <property type="match status" value="1"/>
</dbReference>
<sequence>MGPHFTLLLAALANCLCPGRPCIKCDQFVTDALKTFENTYLNDHLPHDIHKNVMRMVNHEVSSFGVVTSAEDSYLGAVDENTLEQATWSFLKDLKRITDSDLKGELFIKELLWMLRHQKDIFNNLARQFQKEVLCPNKCGVMSQTLIWCLKCEKQLHICRKSLDCGERHIEVHRSEDLVLDCLLSWHRASKGLTDYSFYRVWENSSETLIAKGKEPYLTKSMVGPEDAGNYRCVLDTINQGHATVIRYDVTVLPPKHSEENQPPNIITQEEHETPVHVTPQTPPGQEPESELYPELHPELYPELIPTVAQNPEKKMKTRLLILLTLGFVVLVASIIISVLHFRKVSAKLKNASDEVKPTASGSKSDQSLSQQMGLKKASQADFNSDYSGDKSEATEN</sequence>
<organism>
    <name type="scientific">Mus musculus</name>
    <name type="common">Mouse</name>
    <dbReference type="NCBI Taxonomy" id="10090"/>
    <lineage>
        <taxon>Eukaryota</taxon>
        <taxon>Metazoa</taxon>
        <taxon>Chordata</taxon>
        <taxon>Craniata</taxon>
        <taxon>Vertebrata</taxon>
        <taxon>Euteleostomi</taxon>
        <taxon>Mammalia</taxon>
        <taxon>Eutheria</taxon>
        <taxon>Euarchontoglires</taxon>
        <taxon>Glires</taxon>
        <taxon>Rodentia</taxon>
        <taxon>Myomorpha</taxon>
        <taxon>Muroidea</taxon>
        <taxon>Muridae</taxon>
        <taxon>Murinae</taxon>
        <taxon>Mus</taxon>
        <taxon>Mus</taxon>
    </lineage>
</organism>
<evidence type="ECO:0000250" key="1">
    <source>
        <dbReference type="UniProtKB" id="Q6AY06"/>
    </source>
</evidence>
<evidence type="ECO:0000250" key="2">
    <source>
        <dbReference type="UniProtKB" id="Q8IYV9"/>
    </source>
</evidence>
<evidence type="ECO:0000255" key="3"/>
<evidence type="ECO:0000256" key="4">
    <source>
        <dbReference type="SAM" id="MobiDB-lite"/>
    </source>
</evidence>
<evidence type="ECO:0000269" key="5">
    <source>
    </source>
</evidence>
<evidence type="ECO:0000269" key="6">
    <source>
    </source>
</evidence>
<evidence type="ECO:0000269" key="7">
    <source>
    </source>
</evidence>
<evidence type="ECO:0000269" key="8">
    <source>
    </source>
</evidence>
<evidence type="ECO:0000269" key="9">
    <source>
    </source>
</evidence>
<evidence type="ECO:0000269" key="10">
    <source>
    </source>
</evidence>
<evidence type="ECO:0000269" key="11">
    <source>
    </source>
</evidence>
<evidence type="ECO:0000269" key="12">
    <source>
    </source>
</evidence>
<evidence type="ECO:0000269" key="13">
    <source>
    </source>
</evidence>
<evidence type="ECO:0000269" key="14">
    <source>
    </source>
</evidence>
<evidence type="ECO:0000269" key="15">
    <source>
    </source>
</evidence>
<evidence type="ECO:0000269" key="16">
    <source>
    </source>
</evidence>
<evidence type="ECO:0000269" key="17">
    <source>
    </source>
</evidence>
<evidence type="ECO:0000269" key="18">
    <source>
    </source>
</evidence>
<evidence type="ECO:0000269" key="19">
    <source>
    </source>
</evidence>
<evidence type="ECO:0000269" key="20">
    <source>
    </source>
</evidence>
<evidence type="ECO:0000269" key="21">
    <source>
    </source>
</evidence>
<evidence type="ECO:0000269" key="22">
    <source>
    </source>
</evidence>
<evidence type="ECO:0000269" key="23">
    <source>
    </source>
</evidence>
<evidence type="ECO:0000303" key="24">
    <source>
    </source>
</evidence>
<evidence type="ECO:0000305" key="25"/>
<evidence type="ECO:0000305" key="26">
    <source>
    </source>
</evidence>
<evidence type="ECO:0000305" key="27">
    <source>
    </source>
</evidence>
<evidence type="ECO:0000312" key="28">
    <source>
        <dbReference type="MGI" id="MGI:1920706"/>
    </source>
</evidence>
<evidence type="ECO:0000312" key="29">
    <source>
        <dbReference type="PDB" id="5B5K"/>
    </source>
</evidence>
<evidence type="ECO:0007744" key="30">
    <source>
        <dbReference type="PDB" id="5B5K"/>
    </source>
</evidence>
<evidence type="ECO:0007829" key="31">
    <source>
        <dbReference type="PDB" id="5B5K"/>
    </source>
</evidence>
<comment type="function">
    <text evidence="5 9 12 20 23">Essential sperm cell-surface protein required for fertilization by acting as a ligand for IZUMO1R/JUNO receptor on egg (PubMed:15759005, PubMed:24739963, PubMed:27309808). The IZUMO1:IZUMO1R/JUNO interaction is a necessary adhesion event between sperm and egg that is required for fertilization but is not sufficient for cell fusion (PubMed:15759005, PubMed:24739963, PubMed:27309808). The ligand-receptor interaction probably does not act as a membrane 'fusogen' (PubMed:15759005, PubMed:24739963, PubMed:27309808). Plays a critical role in sperm-oolemma binding prior to plasma membrane fusion (PubMed:35096839). Can mediate cell-cell fusion in cultured mammalian cells independently of its binding to IZUMO1R/JUNO (PubMed:36394541).</text>
</comment>
<comment type="subunit">
    <text evidence="1 2 7 8 9 10 11 12 15 16 17 22 23">Monomer, homodimer; disulfide-linked and homooligomer; depending on the context (PubMed:19658160, PubMed:26568141, PubMed:29954238). Interacts with IZUMO1R/JUNO (PubMed:24739963, PubMed:25209248, PubMed:27309808, PubMed:32484434, PubMed:30517645, PubMed:36394541). IZUMO1 and IZUMO1R/JUNO form a complex with 1:1 stoichiometry (By similarity). In gamete recognition, IZUMO1R/JUNO first binds to monomeric IZUMO1 (PubMed:26568141, PubMed:29954238). The weak, but specific interaction with IZUMO1R/JUNO induces IZUMO1 homodimerization (PubMed:26568141, PubMed:29954238). The process follows a tight binding phase where IZUMO1 bends the entire structure towards the sperm membrane side through a thiol-disulfide exchange reaction (PubMed:26568141, PubMed:29954238). The molecule no longer binds to IZUMO1R/JUNO and instead binds to a putative second oocyte receptor (PubMed:26568141, PubMed:29954238). Interacts with ACE3 (By similarity) (PubMed:19658160, PubMed:20421979, PubMed:24739963, PubMed:25209248, PubMed:26568141, PubMed:27309808, PubMed:29954238, PubMed:35960805). Part of a oolemmal binding multimeric complex (IZUMO1 complex) composed at least of IZUMO1 and GLIPR1L1; the complex assemblage is influenced by the maturation status of the male germ cell (PubMed:31672133). Interacts with GLIPR1L1 (PubMed:31672133). Interacts with FREY; the interaction retains IZUMO1 at the endoplasmic reticulum membrane and coordinates IZUMO1 complex assembly (PubMed:35960805). Interacts with WDR54 (By similarity). Forms a complex with SPACA6 and TMEM81 on spermatocyte cell membrane (By similarity).</text>
</comment>
<comment type="subcellular location">
    <subcellularLocation>
        <location evidence="10 12 23 27">Cell membrane</location>
        <topology evidence="3">Single-pass type I membrane protein</topology>
    </subcellularLocation>
    <subcellularLocation>
        <location evidence="8 12 17 18 19">Cytoplasmic vesicle</location>
        <location evidence="8 12 17 18 19">Secretory vesicle</location>
        <location evidence="8 12 17 18 19">Acrosome membrane</location>
        <topology evidence="3">Single-pass type I membrane protein</topology>
    </subcellularLocation>
    <text evidence="14 17">Localizes initially to the acrosome membrane of the sperm head (both outer and inner acrosomal membranes). During the acrosome reaction, translocates to the plasma membrane.</text>
</comment>
<comment type="tissue specificity">
    <text evidence="5 7 8 17 21 22">Sperm-specific (at protein level) (PubMed:15759005, PubMed:19658160, PubMed:20421979, PubMed:31672133, PubMed:32484434, PubMed:35960805). Detectable on sperm surface only after the acrosome reaction (PubMed:15759005). Expressed in spermatozoa, more abundantly expressed in the head than the tail (at protein level) (PubMed:35618043).</text>
</comment>
<comment type="developmental stage">
    <text evidence="22">Partially colocalizes with FREY1 in endoplasmic reticulum membrane of round spermatids.</text>
</comment>
<comment type="domain">
    <text evidence="2">The extracellular domain assumes a distinct boomerang shape when not bound to IZUMO1R/JUNO (By similarity). Interaction with IZUMO1R/JUNO triggers a conformation change, so that the IZUMO1 extracellular domain assumes an upright conformation (By similarity).</text>
</comment>
<comment type="domain">
    <text evidence="14">The cytoplasmic C-terminus region is not essential for fertilization (PubMed:27624483). It is however required for protein stability (PubMed:27624483).</text>
</comment>
<comment type="PTM">
    <text evidence="6">N-glycosylated. Glycosylation is not essential for fusion and for proper protein trafficking in sperm.</text>
</comment>
<comment type="PTM">
    <text evidence="7 14">Phosphorylated (PubMed:19658160, PubMed:27624483). The cytoplasmic C-terminus is phosphorylated and undergoes phosphorylation changes during epididymal transit (PubMed:27624483).</text>
</comment>
<comment type="disruption phenotype">
    <text evidence="5 20">Mice are healthy but the males are sterile (PubMed:15759005). They produce morphologically normal sperm that can bind to and penetrate the zona pellucida but that are incapable of fusing with eggs (PubMed:15759005). Spermatozoa show impaired adhesion to the oolemma (PubMed:35096839).</text>
</comment>
<comment type="miscellaneous">
    <text evidence="26">Izumo is the name of a Japanese shrine to marriage.</text>
</comment>
<comment type="similarity">
    <text evidence="25">Belongs to the Izumo family.</text>
</comment>
<gene>
    <name evidence="24 28" type="primary">Izumo1</name>
</gene>
<proteinExistence type="evidence at protein level"/>
<feature type="signal peptide" evidence="3">
    <location>
        <begin position="1"/>
        <end position="21"/>
    </location>
</feature>
<feature type="chain" id="PRO_0000045483" description="Izumo sperm-egg fusion protein 1">
    <location>
        <begin position="22"/>
        <end position="397"/>
    </location>
</feature>
<feature type="topological domain" description="Extracellular" evidence="3">
    <location>
        <begin position="22"/>
        <end position="319"/>
    </location>
</feature>
<feature type="transmembrane region" description="Helical" evidence="3">
    <location>
        <begin position="320"/>
        <end position="340"/>
    </location>
</feature>
<feature type="topological domain" description="Cytoplasmic" evidence="3">
    <location>
        <begin position="341"/>
        <end position="397"/>
    </location>
</feature>
<feature type="domain" description="Ig-like C2-type">
    <location>
        <begin position="167"/>
        <end position="251"/>
    </location>
</feature>
<feature type="region of interest" description="Important for interaction with IZUMO1R" evidence="12">
    <location>
        <begin position="148"/>
        <end position="160"/>
    </location>
</feature>
<feature type="region of interest" description="Disordered" evidence="4">
    <location>
        <begin position="271"/>
        <end position="292"/>
    </location>
</feature>
<feature type="region of interest" description="Disordered" evidence="4">
    <location>
        <begin position="351"/>
        <end position="397"/>
    </location>
</feature>
<feature type="compositionally biased region" description="Polar residues" evidence="4">
    <location>
        <begin position="360"/>
        <end position="373"/>
    </location>
</feature>
<feature type="compositionally biased region" description="Basic and acidic residues" evidence="4">
    <location>
        <begin position="388"/>
        <end position="397"/>
    </location>
</feature>
<feature type="modified residue" description="Phosphoserine" evidence="1">
    <location>
        <position position="379"/>
    </location>
</feature>
<feature type="glycosylation site" description="N-linked (GlcNAc...) asparagine" evidence="6 13 29">
    <location>
        <position position="204"/>
    </location>
</feature>
<feature type="disulfide bond" evidence="13 29">
    <location>
        <begin position="22"/>
        <end position="149"/>
    </location>
</feature>
<feature type="disulfide bond" evidence="13 29">
    <location>
        <begin position="25"/>
        <end position="152"/>
    </location>
</feature>
<feature type="disulfide bond" evidence="13 29">
    <location>
        <begin position="135"/>
        <end position="159"/>
    </location>
</feature>
<feature type="disulfide bond" evidence="13 29">
    <location>
        <begin position="139"/>
        <end position="165"/>
    </location>
</feature>
<feature type="disulfide bond" evidence="13 29">
    <location>
        <begin position="182"/>
        <end position="233"/>
    </location>
</feature>
<feature type="mutagenesis site" description="No effect on localization to cell membrane or interaction with IZUMO1R but loss of its ability to mediate cell-cell fusion; when associated with A-88 and A-113." evidence="23">
    <original>F</original>
    <variation>A</variation>
    <location>
        <position position="28"/>
    </location>
</feature>
<feature type="mutagenesis site" description="No effect on localization to cell membrane or interaction with IZUMO1R but loss of its ability to mediate cell-cell fusion; when associated with A-28 and A-113." evidence="23">
    <original>W</original>
    <variation>A</variation>
    <location>
        <position position="88"/>
    </location>
</feature>
<feature type="mutagenesis site" description="No effect on localization to cell membrane or interaction with IZUMO1R but loss of its ability to mediate cell-cell fusion; when associated with A-28 and A-88." evidence="23">
    <original>W</original>
    <variation>A</variation>
    <location>
        <position position="113"/>
    </location>
</feature>
<feature type="mutagenesis site" description="Abolishes adhesion to oocytes. Loss of interaction with IZUMO1R but no effect on localization to cell membrane or its ability to mediate cell-cell fusion." evidence="12 23">
    <original>W</original>
    <variation>A</variation>
    <location>
        <position position="148"/>
    </location>
</feature>
<feature type="mutagenesis site" description="Decreases adhesion to oocytes." evidence="12">
    <original>K</original>
    <variation>A</variation>
    <location>
        <position position="154"/>
    </location>
</feature>
<feature type="mutagenesis site" description="Abolishes adhesion to oocytes." evidence="12">
    <original>H</original>
    <variation>A</variation>
    <location>
        <position position="157"/>
    </location>
</feature>
<feature type="mutagenesis site" description="Strongly decreases adhesion to oocytes." evidence="12">
    <original>I</original>
    <variation>R</variation>
    <location>
        <position position="158"/>
    </location>
</feature>
<feature type="mutagenesis site" description="Abolishes adhesion to oocytes." evidence="12">
    <original>R</original>
    <variation>A</variation>
    <location>
        <position position="160"/>
    </location>
</feature>
<feature type="mutagenesis site" description="Decreases adhesion to oocytes." evidence="12">
    <original>L</original>
    <variation>A</variation>
    <location>
        <position position="163"/>
    </location>
</feature>
<feature type="mutagenesis site" description="Almost no change in fusion-facilitating activity." evidence="6">
    <original>N</original>
    <variation>Q</variation>
    <location>
        <position position="204"/>
    </location>
</feature>
<feature type="helix" evidence="31">
    <location>
        <begin position="23"/>
        <end position="25"/>
    </location>
</feature>
<feature type="helix" evidence="31">
    <location>
        <begin position="27"/>
        <end position="38"/>
    </location>
</feature>
<feature type="helix" evidence="31">
    <location>
        <begin position="40"/>
        <end position="44"/>
    </location>
</feature>
<feature type="helix" evidence="31">
    <location>
        <begin position="47"/>
        <end position="49"/>
    </location>
</feature>
<feature type="helix" evidence="31">
    <location>
        <begin position="50"/>
        <end position="62"/>
    </location>
</feature>
<feature type="turn" evidence="31">
    <location>
        <begin position="63"/>
        <end position="65"/>
    </location>
</feature>
<feature type="helix" evidence="31">
    <location>
        <begin position="70"/>
        <end position="75"/>
    </location>
</feature>
<feature type="strand" evidence="31">
    <location>
        <begin position="76"/>
        <end position="79"/>
    </location>
</feature>
<feature type="helix" evidence="31">
    <location>
        <begin position="80"/>
        <end position="99"/>
    </location>
</feature>
<feature type="helix" evidence="31">
    <location>
        <begin position="104"/>
        <end position="131"/>
    </location>
</feature>
<feature type="strand" evidence="31">
    <location>
        <begin position="138"/>
        <end position="148"/>
    </location>
</feature>
<feature type="turn" evidence="31">
    <location>
        <begin position="149"/>
        <end position="152"/>
    </location>
</feature>
<feature type="strand" evidence="31">
    <location>
        <begin position="153"/>
        <end position="160"/>
    </location>
</feature>
<feature type="strand" evidence="31">
    <location>
        <begin position="163"/>
        <end position="173"/>
    </location>
</feature>
<feature type="strand" evidence="31">
    <location>
        <begin position="178"/>
        <end position="181"/>
    </location>
</feature>
<feature type="helix" evidence="31">
    <location>
        <begin position="185"/>
        <end position="188"/>
    </location>
</feature>
<feature type="strand" evidence="31">
    <location>
        <begin position="191"/>
        <end position="201"/>
    </location>
</feature>
<feature type="strand" evidence="31">
    <location>
        <begin position="207"/>
        <end position="214"/>
    </location>
</feature>
<feature type="strand" evidence="31">
    <location>
        <begin position="216"/>
        <end position="220"/>
    </location>
</feature>
<feature type="helix" evidence="31">
    <location>
        <begin position="225"/>
        <end position="227"/>
    </location>
</feature>
<feature type="strand" evidence="31">
    <location>
        <begin position="229"/>
        <end position="240"/>
    </location>
</feature>
<feature type="strand" evidence="31">
    <location>
        <begin position="242"/>
        <end position="253"/>
    </location>
</feature>
<accession>Q9D9J7</accession>
<reference key="1">
    <citation type="journal article" date="2005" name="Nature">
        <title>The immunoglobulin superfamily protein Izumo is required for sperm to fuse with eggs.</title>
        <authorList>
            <person name="Inoue N."/>
            <person name="Ikawa M."/>
            <person name="Isotani A."/>
            <person name="Okabe M."/>
        </authorList>
    </citation>
    <scope>NUCLEOTIDE SEQUENCE [MRNA]</scope>
    <scope>FUNCTION</scope>
    <scope>TISSUE SPECIFICITY</scope>
    <scope>DISRUPTION PHENOTYPE</scope>
    <scope>IDENTIFICATION BY MASS SPECTROMETRY</scope>
    <source>
        <strain>C57BL/6J</strain>
        <tissue>Testis</tissue>
    </source>
</reference>
<reference key="2">
    <citation type="journal article" date="2005" name="Science">
        <title>The transcriptional landscape of the mammalian genome.</title>
        <authorList>
            <person name="Carninci P."/>
            <person name="Kasukawa T."/>
            <person name="Katayama S."/>
            <person name="Gough J."/>
            <person name="Frith M.C."/>
            <person name="Maeda N."/>
            <person name="Oyama R."/>
            <person name="Ravasi T."/>
            <person name="Lenhard B."/>
            <person name="Wells C."/>
            <person name="Kodzius R."/>
            <person name="Shimokawa K."/>
            <person name="Bajic V.B."/>
            <person name="Brenner S.E."/>
            <person name="Batalov S."/>
            <person name="Forrest A.R."/>
            <person name="Zavolan M."/>
            <person name="Davis M.J."/>
            <person name="Wilming L.G."/>
            <person name="Aidinis V."/>
            <person name="Allen J.E."/>
            <person name="Ambesi-Impiombato A."/>
            <person name="Apweiler R."/>
            <person name="Aturaliya R.N."/>
            <person name="Bailey T.L."/>
            <person name="Bansal M."/>
            <person name="Baxter L."/>
            <person name="Beisel K.W."/>
            <person name="Bersano T."/>
            <person name="Bono H."/>
            <person name="Chalk A.M."/>
            <person name="Chiu K.P."/>
            <person name="Choudhary V."/>
            <person name="Christoffels A."/>
            <person name="Clutterbuck D.R."/>
            <person name="Crowe M.L."/>
            <person name="Dalla E."/>
            <person name="Dalrymple B.P."/>
            <person name="de Bono B."/>
            <person name="Della Gatta G."/>
            <person name="di Bernardo D."/>
            <person name="Down T."/>
            <person name="Engstrom P."/>
            <person name="Fagiolini M."/>
            <person name="Faulkner G."/>
            <person name="Fletcher C.F."/>
            <person name="Fukushima T."/>
            <person name="Furuno M."/>
            <person name="Futaki S."/>
            <person name="Gariboldi M."/>
            <person name="Georgii-Hemming P."/>
            <person name="Gingeras T.R."/>
            <person name="Gojobori T."/>
            <person name="Green R.E."/>
            <person name="Gustincich S."/>
            <person name="Harbers M."/>
            <person name="Hayashi Y."/>
            <person name="Hensch T.K."/>
            <person name="Hirokawa N."/>
            <person name="Hill D."/>
            <person name="Huminiecki L."/>
            <person name="Iacono M."/>
            <person name="Ikeo K."/>
            <person name="Iwama A."/>
            <person name="Ishikawa T."/>
            <person name="Jakt M."/>
            <person name="Kanapin A."/>
            <person name="Katoh M."/>
            <person name="Kawasawa Y."/>
            <person name="Kelso J."/>
            <person name="Kitamura H."/>
            <person name="Kitano H."/>
            <person name="Kollias G."/>
            <person name="Krishnan S.P."/>
            <person name="Kruger A."/>
            <person name="Kummerfeld S.K."/>
            <person name="Kurochkin I.V."/>
            <person name="Lareau L.F."/>
            <person name="Lazarevic D."/>
            <person name="Lipovich L."/>
            <person name="Liu J."/>
            <person name="Liuni S."/>
            <person name="McWilliam S."/>
            <person name="Madan Babu M."/>
            <person name="Madera M."/>
            <person name="Marchionni L."/>
            <person name="Matsuda H."/>
            <person name="Matsuzawa S."/>
            <person name="Miki H."/>
            <person name="Mignone F."/>
            <person name="Miyake S."/>
            <person name="Morris K."/>
            <person name="Mottagui-Tabar S."/>
            <person name="Mulder N."/>
            <person name="Nakano N."/>
            <person name="Nakauchi H."/>
            <person name="Ng P."/>
            <person name="Nilsson R."/>
            <person name="Nishiguchi S."/>
            <person name="Nishikawa S."/>
            <person name="Nori F."/>
            <person name="Ohara O."/>
            <person name="Okazaki Y."/>
            <person name="Orlando V."/>
            <person name="Pang K.C."/>
            <person name="Pavan W.J."/>
            <person name="Pavesi G."/>
            <person name="Pesole G."/>
            <person name="Petrovsky N."/>
            <person name="Piazza S."/>
            <person name="Reed J."/>
            <person name="Reid J.F."/>
            <person name="Ring B.Z."/>
            <person name="Ringwald M."/>
            <person name="Rost B."/>
            <person name="Ruan Y."/>
            <person name="Salzberg S.L."/>
            <person name="Sandelin A."/>
            <person name="Schneider C."/>
            <person name="Schoenbach C."/>
            <person name="Sekiguchi K."/>
            <person name="Semple C.A."/>
            <person name="Seno S."/>
            <person name="Sessa L."/>
            <person name="Sheng Y."/>
            <person name="Shibata Y."/>
            <person name="Shimada H."/>
            <person name="Shimada K."/>
            <person name="Silva D."/>
            <person name="Sinclair B."/>
            <person name="Sperling S."/>
            <person name="Stupka E."/>
            <person name="Sugiura K."/>
            <person name="Sultana R."/>
            <person name="Takenaka Y."/>
            <person name="Taki K."/>
            <person name="Tammoja K."/>
            <person name="Tan S.L."/>
            <person name="Tang S."/>
            <person name="Taylor M.S."/>
            <person name="Tegner J."/>
            <person name="Teichmann S.A."/>
            <person name="Ueda H.R."/>
            <person name="van Nimwegen E."/>
            <person name="Verardo R."/>
            <person name="Wei C.L."/>
            <person name="Yagi K."/>
            <person name="Yamanishi H."/>
            <person name="Zabarovsky E."/>
            <person name="Zhu S."/>
            <person name="Zimmer A."/>
            <person name="Hide W."/>
            <person name="Bult C."/>
            <person name="Grimmond S.M."/>
            <person name="Teasdale R.D."/>
            <person name="Liu E.T."/>
            <person name="Brusic V."/>
            <person name="Quackenbush J."/>
            <person name="Wahlestedt C."/>
            <person name="Mattick J.S."/>
            <person name="Hume D.A."/>
            <person name="Kai C."/>
            <person name="Sasaki D."/>
            <person name="Tomaru Y."/>
            <person name="Fukuda S."/>
            <person name="Kanamori-Katayama M."/>
            <person name="Suzuki M."/>
            <person name="Aoki J."/>
            <person name="Arakawa T."/>
            <person name="Iida J."/>
            <person name="Imamura K."/>
            <person name="Itoh M."/>
            <person name="Kato T."/>
            <person name="Kawaji H."/>
            <person name="Kawagashira N."/>
            <person name="Kawashima T."/>
            <person name="Kojima M."/>
            <person name="Kondo S."/>
            <person name="Konno H."/>
            <person name="Nakano K."/>
            <person name="Ninomiya N."/>
            <person name="Nishio T."/>
            <person name="Okada M."/>
            <person name="Plessy C."/>
            <person name="Shibata K."/>
            <person name="Shiraki T."/>
            <person name="Suzuki S."/>
            <person name="Tagami M."/>
            <person name="Waki K."/>
            <person name="Watahiki A."/>
            <person name="Okamura-Oho Y."/>
            <person name="Suzuki H."/>
            <person name="Kawai J."/>
            <person name="Hayashizaki Y."/>
        </authorList>
    </citation>
    <scope>NUCLEOTIDE SEQUENCE [LARGE SCALE MRNA]</scope>
    <source>
        <strain>C57BL/6J</strain>
        <tissue>Testis</tissue>
    </source>
</reference>
<reference key="3">
    <citation type="journal article" date="2008" name="Biochem. Biophys. Res. Commun.">
        <title>Putative sperm fusion protein IZUMO and the role of N-glycosylation.</title>
        <authorList>
            <person name="Inoue N."/>
            <person name="Ikawa M."/>
            <person name="Okabe M."/>
        </authorList>
    </citation>
    <scope>GLYCOSYLATION AT ASN-204</scope>
    <scope>MUTAGENESIS OF ASN-204</scope>
</reference>
<reference key="4">
    <citation type="journal article" date="2009" name="Mol. Reprod. Dev.">
        <title>Izumo is part of a multiprotein family whose members form large complexes on mammalian sperm.</title>
        <authorList>
            <person name="Ellerman D.A."/>
            <person name="Pei J."/>
            <person name="Gupta S."/>
            <person name="Snell W.J."/>
            <person name="Myles D."/>
            <person name="Primakoff P."/>
        </authorList>
    </citation>
    <scope>SUBUNIT</scope>
    <scope>SUBCELLULAR LOCATION</scope>
    <scope>TISSUE SPECIFICITY</scope>
    <scope>PHOSPHORYLATION</scope>
    <scope>GENE FAMILY</scope>
    <scope>NOMENCLATURE</scope>
</reference>
<reference key="5">
    <citation type="journal article" date="2010" name="Cell">
        <title>A tissue-specific atlas of mouse protein phosphorylation and expression.</title>
        <authorList>
            <person name="Huttlin E.L."/>
            <person name="Jedrychowski M.P."/>
            <person name="Elias J.E."/>
            <person name="Goswami T."/>
            <person name="Rad R."/>
            <person name="Beausoleil S.A."/>
            <person name="Villen J."/>
            <person name="Haas W."/>
            <person name="Sowa M.E."/>
            <person name="Gygi S.P."/>
        </authorList>
    </citation>
    <scope>IDENTIFICATION BY MASS SPECTROMETRY [LARGE SCALE ANALYSIS]</scope>
    <source>
        <tissue>Testis</tissue>
    </source>
</reference>
<reference key="6">
    <citation type="journal article" date="2010" name="PLoS ONE">
        <title>Identification and disruption of sperm-specific angiotensin converting enzyme-3 (ACE3) in mouse.</title>
        <authorList>
            <person name="Inoue N."/>
            <person name="Kasahara T."/>
            <person name="Ikawa M."/>
            <person name="Okabe M."/>
        </authorList>
    </citation>
    <scope>INTERACTION WITH ACE3</scope>
    <scope>SUBCELLULAR LOCATION</scope>
    <scope>TISSUE SPECIFICITY</scope>
</reference>
<reference key="7">
    <citation type="journal article" date="2014" name="Development">
        <title>Binding of sperm protein Izumo1 and its egg receptor Juno drives Cd9 accumulation in the intercellular contact area prior to fusion during mammalian fertilization.</title>
        <authorList>
            <person name="Chalbi M."/>
            <person name="Barraud-Lange V."/>
            <person name="Ravaux B."/>
            <person name="Howan K."/>
            <person name="Rodriguez N."/>
            <person name="Soule P."/>
            <person name="Ndzoudi A."/>
            <person name="Boucheix C."/>
            <person name="Rubinstein E."/>
            <person name="Wolf J.P."/>
            <person name="Ziyyat A."/>
            <person name="Perez E."/>
            <person name="Pincet F."/>
            <person name="Gourier C."/>
        </authorList>
    </citation>
    <scope>SUBCELLULAR LOCATION</scope>
    <scope>INTERACTION WITH IZUMO1R</scope>
</reference>
<reference key="8">
    <citation type="journal article" date="2014" name="Nature">
        <title>Juno is the egg Izumo receptor and is essential for mammalian fertilization.</title>
        <authorList>
            <person name="Bianchi E."/>
            <person name="Doe B."/>
            <person name="Goulding D."/>
            <person name="Wright G.J."/>
        </authorList>
    </citation>
    <scope>FUNCTION</scope>
    <scope>INTERACTION WITH IZUMO1R</scope>
</reference>
<reference key="9">
    <citation type="journal article" date="2015" name="Nat. Commun.">
        <title>Oocyte-triggered dimerization of sperm IZUMO1 promotes sperm-egg fusion in mice.</title>
        <authorList>
            <person name="Inoue N."/>
            <person name="Hagihara Y."/>
            <person name="Wright D."/>
            <person name="Suzuki T."/>
            <person name="Wada I."/>
        </authorList>
    </citation>
    <scope>SUBUNIT</scope>
    <scope>INTERACTION WITH IZUMO1R</scope>
</reference>
<reference key="10">
    <citation type="journal article" date="2016" name="Reproduction">
        <title>CRISPR/Cas9-mediated mutation revealed cytoplasmic tail is dispensable for IZUMO1 function and male fertility.</title>
        <authorList>
            <person name="Young S.A."/>
            <person name="Miyata H."/>
            <person name="Satouh Y."/>
            <person name="Muto M."/>
            <person name="Larsen M.R."/>
            <person name="Aitken R.J."/>
            <person name="Baker M.A."/>
            <person name="Ikawa M."/>
        </authorList>
    </citation>
    <scope>SUBCELLULAR LOCATION</scope>
    <scope>PHOSPHORYLATION</scope>
    <scope>DOMAIN</scope>
</reference>
<reference key="11">
    <citation type="journal article" date="2016" name="Nature">
        <title>Structure of IZUMO1-JUNO reveals sperm-oocyte recognition during mammalian fertilization.</title>
        <authorList>
            <person name="Ohto U."/>
            <person name="Ishida H."/>
            <person name="Krayukhina E."/>
            <person name="Uchiyama S."/>
            <person name="Inoue N."/>
            <person name="Shimizu T."/>
        </authorList>
    </citation>
    <scope>FUNCTION</scope>
    <scope>SUBCELLULAR LOCATION</scope>
    <scope>INTERACTION WITH IZUMO1R</scope>
    <scope>MUTAGENESIS OF TRP-148; LYS-154; HIS-157; ILE-158; ARG-160 AND LEU-163</scope>
</reference>
<reference key="12">
    <citation type="journal article" date="2018" name="Cell Cycle">
        <title>Monitoring dimeric status of IZUMO1 during the acrosome reaction in living spermatozoon.</title>
        <authorList>
            <person name="Inoue N."/>
            <person name="Wada I."/>
        </authorList>
    </citation>
    <scope>SUBUNIT</scope>
</reference>
<reference key="13">
    <citation type="journal article" date="2019" name="BMC Biol.">
        <title>GLIPR1L1 is an IZUMO-binding protein required for optimal fertilization in the mouse.</title>
        <authorList>
            <person name="Gaikwad A.S."/>
            <person name="Anderson A.L."/>
            <person name="Merriner D.J."/>
            <person name="O'Connor A.E."/>
            <person name="Houston B.J."/>
            <person name="Aitken R.J."/>
            <person name="O'Bryan M.K."/>
            <person name="Nixon B."/>
        </authorList>
    </citation>
    <scope>SUBUNIT</scope>
    <scope>INTERACTION WITH GLIPR1L1</scope>
    <scope>TISSUE SPECIFICITY</scope>
    <scope>SUBCELLULAR LOCATION</scope>
</reference>
<reference key="14">
    <citation type="journal article" date="2019" name="Hum. Reprod.">
        <title>JUNO, the receptor of sperm IZUMO1, is expressed by the human oocyte and is essential for human fertilisation.</title>
        <authorList>
            <person name="Jean C."/>
            <person name="Haghighirad F."/>
            <person name="Zhu Y."/>
            <person name="Chalbi M."/>
            <person name="Ziyyat A."/>
            <person name="Rubinstein E."/>
            <person name="Gourier C."/>
            <person name="Yip P."/>
            <person name="Wolf J.P."/>
            <person name="Lee J.E."/>
            <person name="Boucheix C."/>
            <person name="Barraud-Lange V."/>
        </authorList>
    </citation>
    <scope>INTERACTION WITH IZUMO1R</scope>
</reference>
<reference key="15">
    <citation type="journal article" date="2020" name="Elife">
        <title>TMEM95 is a sperm membrane protein essential for mammalian fertilization.</title>
        <authorList>
            <person name="Lamas-Toranzo I."/>
            <person name="Hamze J.G."/>
            <person name="Bianchi E."/>
            <person name="Fernandez-Fuertes B."/>
            <person name="Perez-Cerezales S."/>
            <person name="Laguna-Barraza R."/>
            <person name="Fernandez-Gonzalez R."/>
            <person name="Lonergan P."/>
            <person name="Gutierrez-Adan A."/>
            <person name="Wright G.J."/>
            <person name="Jimenez-Movilla M."/>
            <person name="Bermejo-Alvarez P."/>
        </authorList>
    </citation>
    <scope>INTERACTION WITH IZUMO1R</scope>
    <scope>SUBCELLULAR LOCATION</scope>
    <scope>TISSUE SPECIFICITY</scope>
</reference>
<reference key="16">
    <citation type="journal article" date="2020" name="Proc. Natl. Acad. Sci. U.S.A.">
        <title>Sperm proteins SOF1, TMEM95, and SPACA6 are required for sperm-oocyte fusion in mice.</title>
        <authorList>
            <person name="Noda T."/>
            <person name="Lu Y."/>
            <person name="Fujihara Y."/>
            <person name="Oura S."/>
            <person name="Koyano T."/>
            <person name="Kobayashi S."/>
            <person name="Matzuk M.M."/>
            <person name="Ikawa M."/>
        </authorList>
    </citation>
    <scope>SUBCELLULAR LOCATION</scope>
</reference>
<reference key="17">
    <citation type="journal article" date="2021" name="Front. Cell Dev. Biol.">
        <title>Sperm IZUMO1 Is Required for Binding Preceding Fusion With Oolemma in Mice and Rats.</title>
        <authorList>
            <person name="Matsumura T."/>
            <person name="Noda T."/>
            <person name="Satouh Y."/>
            <person name="Morohoshi A."/>
            <person name="Yuri S."/>
            <person name="Ogawa M."/>
            <person name="Lu Y."/>
            <person name="Isotani A."/>
            <person name="Ikawa M."/>
        </authorList>
    </citation>
    <scope>FUNCTION</scope>
    <scope>DISRUPTION PHENOTYPE</scope>
</reference>
<reference key="18">
    <citation type="journal article" date="2022" name="Dev. Biol.">
        <title>IRGC1, a testis-enriched immunity related GTPase, is important for fibrous sheath integrity and sperm motility in mice.</title>
        <authorList>
            <person name="Kaneda Y."/>
            <person name="Miyata H."/>
            <person name="Shimada K."/>
            <person name="Oyama Y."/>
            <person name="Iida-Norita R."/>
            <person name="Ikawa M."/>
        </authorList>
    </citation>
    <scope>TISSUE SPECIFICITY</scope>
</reference>
<reference key="19">
    <citation type="journal article" date="2022" name="Sci. Adv.">
        <title>C11orf94/Frey is a key regulator for male fertility by controlling Izumo1 complex assembly.</title>
        <authorList>
            <person name="Contreras W."/>
            <person name="Wiesehoefer C."/>
            <person name="Schreier D."/>
            <person name="Leinung N."/>
            <person name="Peche P."/>
            <person name="Wennemuth G."/>
            <person name="Gentzel M."/>
            <person name="Schroeder B."/>
            <person name="Mentrup T."/>
        </authorList>
    </citation>
    <scope>FUNCTION</scope>
    <scope>SUBCELLULAR LOCATION</scope>
    <scope>INTERACTION WITH FREY1 AND ACE3</scope>
    <scope>TISSUE SPECIFICITY</scope>
    <scope>DEVELOPMENTAL STAGE</scope>
    <scope>TOPOLOGY</scope>
</reference>
<reference key="20">
    <citation type="journal article" date="2023" name="J. Cell Biol.">
        <title>A novel function for the sperm adhesion protein IZUMO1 in cell-cell fusion.</title>
        <authorList>
            <person name="Brukman N.G."/>
            <person name="Nakajima K.P."/>
            <person name="Valansi C."/>
            <person name="Flyak K."/>
            <person name="Li X."/>
            <person name="Higashiyama T."/>
            <person name="Podbilewicz B."/>
        </authorList>
    </citation>
    <scope>FUNCTION</scope>
    <scope>SUBCELLULAR LOCATION</scope>
    <scope>INTERACTION WITH IZUMO1R</scope>
    <scope>MUTAGENESIS OF PHE-28; TRP-88; TRP-113 AND TRP-148</scope>
</reference>
<reference evidence="30" key="21">
    <citation type="journal article" date="2016" name="Curr. Biol.">
        <title>The structure of sperm Izumo1 reveals unexpected similarities with Plasmodium invasion proteins.</title>
        <authorList>
            <person name="Nishimura K."/>
            <person name="Han L."/>
            <person name="Bianchi E."/>
            <person name="Wright G.J."/>
            <person name="de Sanctis D."/>
            <person name="Jovine L."/>
        </authorList>
    </citation>
    <scope>X-RAY CRYSTALLOGRAPHY (2.50 ANGSTROMS) OF 22-257</scope>
    <scope>DISULFIDE BONDS</scope>
    <scope>GLYCOSYLATION AT ASN-204</scope>
</reference>
<keyword id="KW-0002">3D-structure</keyword>
<keyword id="KW-1003">Cell membrane</keyword>
<keyword id="KW-0968">Cytoplasmic vesicle</keyword>
<keyword id="KW-1015">Disulfide bond</keyword>
<keyword id="KW-0278">Fertilization</keyword>
<keyword id="KW-0325">Glycoprotein</keyword>
<keyword id="KW-0393">Immunoglobulin domain</keyword>
<keyword id="KW-0472">Membrane</keyword>
<keyword id="KW-0597">Phosphoprotein</keyword>
<keyword id="KW-1185">Reference proteome</keyword>
<keyword id="KW-0732">Signal</keyword>
<keyword id="KW-0812">Transmembrane</keyword>
<keyword id="KW-1133">Transmembrane helix</keyword>
<protein>
    <recommendedName>
        <fullName evidence="25">Izumo sperm-egg fusion protein 1</fullName>
    </recommendedName>
    <alternativeName>
        <fullName evidence="24">Oocyte binding/fusion factor</fullName>
        <shortName evidence="24">OBF</shortName>
    </alternativeName>
    <alternativeName>
        <fullName evidence="24">Sperm-specific protein izumo</fullName>
    </alternativeName>
</protein>
<name>IZUM1_MOUSE</name>